<organism>
    <name type="scientific">Mus musculus</name>
    <name type="common">Mouse</name>
    <dbReference type="NCBI Taxonomy" id="10090"/>
    <lineage>
        <taxon>Eukaryota</taxon>
        <taxon>Metazoa</taxon>
        <taxon>Chordata</taxon>
        <taxon>Craniata</taxon>
        <taxon>Vertebrata</taxon>
        <taxon>Euteleostomi</taxon>
        <taxon>Mammalia</taxon>
        <taxon>Eutheria</taxon>
        <taxon>Euarchontoglires</taxon>
        <taxon>Glires</taxon>
        <taxon>Rodentia</taxon>
        <taxon>Myomorpha</taxon>
        <taxon>Muroidea</taxon>
        <taxon>Muridae</taxon>
        <taxon>Murinae</taxon>
        <taxon>Mus</taxon>
        <taxon>Mus</taxon>
    </lineage>
</organism>
<dbReference type="EC" id="2.3.1.50" evidence="3"/>
<dbReference type="EMBL" id="AK048374">
    <property type="protein sequence ID" value="BAC33316.1"/>
    <property type="molecule type" value="mRNA"/>
</dbReference>
<dbReference type="EMBL" id="AK054240">
    <property type="protein sequence ID" value="BAC35701.1"/>
    <property type="molecule type" value="mRNA"/>
</dbReference>
<dbReference type="EMBL" id="AK078679">
    <property type="protein sequence ID" value="BAC37356.1"/>
    <property type="molecule type" value="mRNA"/>
</dbReference>
<dbReference type="EMBL" id="AK078686">
    <property type="protein sequence ID" value="BAC37359.1"/>
    <property type="molecule type" value="mRNA"/>
</dbReference>
<dbReference type="EMBL" id="AL928899">
    <property type="status" value="NOT_ANNOTATED_CDS"/>
    <property type="molecule type" value="Genomic_DNA"/>
</dbReference>
<dbReference type="EMBL" id="BC094496">
    <property type="protein sequence ID" value="AAH94496.1"/>
    <property type="status" value="ALT_FRAME"/>
    <property type="molecule type" value="mRNA"/>
</dbReference>
<dbReference type="CCDS" id="CCDS16800.1"/>
<dbReference type="RefSeq" id="NP_001343436.1">
    <property type="nucleotide sequence ID" value="NM_001356507.1"/>
</dbReference>
<dbReference type="RefSeq" id="NP_780676.1">
    <property type="nucleotide sequence ID" value="NM_175467.4"/>
</dbReference>
<dbReference type="RefSeq" id="XP_006499358.1">
    <property type="nucleotide sequence ID" value="XM_006499295.3"/>
</dbReference>
<dbReference type="SMR" id="Q8BG54"/>
<dbReference type="BioGRID" id="230752">
    <property type="interactions" value="1"/>
</dbReference>
<dbReference type="FunCoup" id="Q8BG54">
    <property type="interactions" value="285"/>
</dbReference>
<dbReference type="IntAct" id="Q8BG54">
    <property type="interactions" value="2"/>
</dbReference>
<dbReference type="MINT" id="Q8BG54"/>
<dbReference type="STRING" id="10090.ENSMUSP00000048313"/>
<dbReference type="PhosphoSitePlus" id="Q8BG54"/>
<dbReference type="PaxDb" id="10090-ENSMUSP00000048313"/>
<dbReference type="ProteomicsDB" id="254551"/>
<dbReference type="Antibodypedia" id="70994">
    <property type="antibodies" value="61 antibodies from 12 providers"/>
</dbReference>
<dbReference type="DNASU" id="228677"/>
<dbReference type="Ensembl" id="ENSMUST00000047370.3">
    <property type="protein sequence ID" value="ENSMUSP00000048313.3"/>
    <property type="gene ID" value="ENSMUSG00000039092.10"/>
</dbReference>
<dbReference type="Ensembl" id="ENSMUST00000110083.8">
    <property type="protein sequence ID" value="ENSMUSP00000105710.2"/>
    <property type="gene ID" value="ENSMUSG00000039092.10"/>
</dbReference>
<dbReference type="GeneID" id="228677"/>
<dbReference type="KEGG" id="mmu:228677"/>
<dbReference type="UCSC" id="uc008mpd.1">
    <property type="organism name" value="mouse"/>
</dbReference>
<dbReference type="AGR" id="MGI:2444678"/>
<dbReference type="CTD" id="55304"/>
<dbReference type="MGI" id="MGI:2444678">
    <property type="gene designation" value="Sptlc3"/>
</dbReference>
<dbReference type="VEuPathDB" id="HostDB:ENSMUSG00000039092"/>
<dbReference type="eggNOG" id="KOG1357">
    <property type="taxonomic scope" value="Eukaryota"/>
</dbReference>
<dbReference type="GeneTree" id="ENSGT00940000158513"/>
<dbReference type="HOGENOM" id="CLU_015846_7_1_1"/>
<dbReference type="InParanoid" id="Q8BG54"/>
<dbReference type="OMA" id="CVKIGIQ"/>
<dbReference type="OrthoDB" id="65434at2759"/>
<dbReference type="PhylomeDB" id="Q8BG54"/>
<dbReference type="TreeFam" id="TF300452"/>
<dbReference type="Reactome" id="R-MMU-1660661">
    <property type="pathway name" value="Sphingolipid de novo biosynthesis"/>
</dbReference>
<dbReference type="UniPathway" id="UPA00222"/>
<dbReference type="BioGRID-ORCS" id="228677">
    <property type="hits" value="2 hits in 79 CRISPR screens"/>
</dbReference>
<dbReference type="PRO" id="PR:Q8BG54"/>
<dbReference type="Proteomes" id="UP000000589">
    <property type="component" value="Chromosome 2"/>
</dbReference>
<dbReference type="RNAct" id="Q8BG54">
    <property type="molecule type" value="protein"/>
</dbReference>
<dbReference type="Bgee" id="ENSMUSG00000039092">
    <property type="expression patterns" value="Expressed in urinary bladder urothelium and 82 other cell types or tissues"/>
</dbReference>
<dbReference type="GO" id="GO:0005789">
    <property type="term" value="C:endoplasmic reticulum membrane"/>
    <property type="evidence" value="ECO:0007669"/>
    <property type="project" value="UniProtKB-SubCell"/>
</dbReference>
<dbReference type="GO" id="GO:0017059">
    <property type="term" value="C:serine palmitoyltransferase complex"/>
    <property type="evidence" value="ECO:0000266"/>
    <property type="project" value="MGI"/>
</dbReference>
<dbReference type="GO" id="GO:0030170">
    <property type="term" value="F:pyridoxal phosphate binding"/>
    <property type="evidence" value="ECO:0007669"/>
    <property type="project" value="InterPro"/>
</dbReference>
<dbReference type="GO" id="GO:0004758">
    <property type="term" value="F:serine C-palmitoyltransferase activity"/>
    <property type="evidence" value="ECO:0000250"/>
    <property type="project" value="UniProtKB"/>
</dbReference>
<dbReference type="GO" id="GO:0046520">
    <property type="term" value="P:sphingoid biosynthetic process"/>
    <property type="evidence" value="ECO:0000266"/>
    <property type="project" value="MGI"/>
</dbReference>
<dbReference type="GO" id="GO:0046512">
    <property type="term" value="P:sphingosine biosynthetic process"/>
    <property type="evidence" value="ECO:0007669"/>
    <property type="project" value="Ensembl"/>
</dbReference>
<dbReference type="CDD" id="cd06454">
    <property type="entry name" value="KBL_like"/>
    <property type="match status" value="1"/>
</dbReference>
<dbReference type="FunFam" id="3.40.640.10:FF:000047">
    <property type="entry name" value="serine palmitoyltransferase 2 isoform X1"/>
    <property type="match status" value="1"/>
</dbReference>
<dbReference type="Gene3D" id="3.90.1150.10">
    <property type="entry name" value="Aspartate Aminotransferase, domain 1"/>
    <property type="match status" value="1"/>
</dbReference>
<dbReference type="Gene3D" id="3.40.640.10">
    <property type="entry name" value="Type I PLP-dependent aspartate aminotransferase-like (Major domain)"/>
    <property type="match status" value="1"/>
</dbReference>
<dbReference type="InterPro" id="IPR001917">
    <property type="entry name" value="Aminotrans_II_pyridoxalP_BS"/>
</dbReference>
<dbReference type="InterPro" id="IPR004839">
    <property type="entry name" value="Aminotransferase_I/II_large"/>
</dbReference>
<dbReference type="InterPro" id="IPR050087">
    <property type="entry name" value="AON_synthase_class-II"/>
</dbReference>
<dbReference type="InterPro" id="IPR015424">
    <property type="entry name" value="PyrdxlP-dep_Trfase"/>
</dbReference>
<dbReference type="InterPro" id="IPR015421">
    <property type="entry name" value="PyrdxlP-dep_Trfase_major"/>
</dbReference>
<dbReference type="InterPro" id="IPR015422">
    <property type="entry name" value="PyrdxlP-dep_Trfase_small"/>
</dbReference>
<dbReference type="PANTHER" id="PTHR13693">
    <property type="entry name" value="CLASS II AMINOTRANSFERASE/8-AMINO-7-OXONONANOATE SYNTHASE"/>
    <property type="match status" value="1"/>
</dbReference>
<dbReference type="PANTHER" id="PTHR13693:SF56">
    <property type="entry name" value="SERINE PALMITOYLTRANSFERASE 3"/>
    <property type="match status" value="1"/>
</dbReference>
<dbReference type="Pfam" id="PF00155">
    <property type="entry name" value="Aminotran_1_2"/>
    <property type="match status" value="1"/>
</dbReference>
<dbReference type="SUPFAM" id="SSF53383">
    <property type="entry name" value="PLP-dependent transferases"/>
    <property type="match status" value="1"/>
</dbReference>
<dbReference type="PROSITE" id="PS00599">
    <property type="entry name" value="AA_TRANSFER_CLASS_2"/>
    <property type="match status" value="1"/>
</dbReference>
<keyword id="KW-0012">Acyltransferase</keyword>
<keyword id="KW-0256">Endoplasmic reticulum</keyword>
<keyword id="KW-0443">Lipid metabolism</keyword>
<keyword id="KW-0472">Membrane</keyword>
<keyword id="KW-0663">Pyridoxal phosphate</keyword>
<keyword id="KW-1185">Reference proteome</keyword>
<keyword id="KW-0746">Sphingolipid metabolism</keyword>
<keyword id="KW-0808">Transferase</keyword>
<keyword id="KW-0812">Transmembrane</keyword>
<keyword id="KW-1133">Transmembrane helix</keyword>
<name>SPTC3_MOUSE</name>
<sequence>MANLNDSAVTNGTLHNPKTQQGKRQSTGCVKNGISKEAQQNRKAYAEDKPVFEPYQEAPLYVYVLTYMGYGIGILFGYLRDFMRNWGIEKCNAAVEREEQKDFVPLYQDFENFYKRNLYMRIRDSWSHTVCSAPEPYMNVMEKVTDDYNWTFRHTGKVIENIINMASYNYLGLAGKYDDSMVRVKDTLEKYGVGVASTRNEMGTLDIHKELEDLMAEFLNVEAVMSFGMGFATNAMNIPVFVGKGCLILSDEFNHTSVILGSRLSGAVIRPFKHNNAENLEKLLREAIIRGQPGTGRAWKKILIVVEGVYSMEGSIVNLAQIVALKKKYKAYLYIDEAHSIGCTGPTGRGVRELFGLDPEDIDVYMGTFTKSFSGSGGYIGGKKEIVDYLRMQSHSTTYATSMSPVVAAQLIRSLKITMGYEGNIGGMERIQQLKENIKYFRRRLKEMGFIIYGNDFSPVIPVLLYMPAKVSAFSRFLLKKKISVVVVGFPATSLPEGRARFSMSSAHTREMLDTVLEVVDELGDLLNVKYFPLKKSGRAILYNKEGFDNEASFEEMHSEPEA</sequence>
<proteinExistence type="evidence at transcript level"/>
<evidence type="ECO:0000250" key="1"/>
<evidence type="ECO:0000250" key="2">
    <source>
        <dbReference type="UniProtKB" id="O15270"/>
    </source>
</evidence>
<evidence type="ECO:0000250" key="3">
    <source>
        <dbReference type="UniProtKB" id="Q9NUV7"/>
    </source>
</evidence>
<evidence type="ECO:0000255" key="4"/>
<evidence type="ECO:0000256" key="5">
    <source>
        <dbReference type="SAM" id="MobiDB-lite"/>
    </source>
</evidence>
<evidence type="ECO:0000269" key="6">
    <source>
    </source>
</evidence>
<evidence type="ECO:0000305" key="7"/>
<evidence type="ECO:0000312" key="8">
    <source>
        <dbReference type="MGI" id="MGI:2444678"/>
    </source>
</evidence>
<feature type="chain" id="PRO_0000304978" description="Serine palmitoyltransferase 3">
    <location>
        <begin position="1"/>
        <end position="563"/>
    </location>
</feature>
<feature type="transmembrane region" description="Helical" evidence="4">
    <location>
        <begin position="59"/>
        <end position="79"/>
    </location>
</feature>
<feature type="region of interest" description="Disordered" evidence="5">
    <location>
        <begin position="1"/>
        <end position="32"/>
    </location>
</feature>
<feature type="compositionally biased region" description="Polar residues" evidence="5">
    <location>
        <begin position="1"/>
        <end position="29"/>
    </location>
</feature>
<feature type="modified residue" description="N6-(pyridoxal phosphate)lysine" evidence="1">
    <location>
        <position position="371"/>
    </location>
</feature>
<comment type="function">
    <text evidence="3">Component of the serine palmitoyltransferase multisubunit enzyme (SPT) that catalyzes the initial and rate-limiting step in sphingolipid biosynthesis by condensing L-serine and activated acyl-CoA (most commonly palmitoyl-CoA) to form long-chain bases. The SPT complex is composed of SPTLC1, SPTLC2 or SPTLC3 and SPTSSA or SPTSSB. Within this complex, the heterodimer consisting of SPTLC1 and SPTLC2/SPTLC3 forms the catalytic core. The composition of the serine palmitoyltransferase (SPT) complex determines the substrate preference. The SPTLC1-SPTLC2-SPTSSA complex shows a strong preference for C16-CoA substrate, while the SPTLC1-SPTLC3-SPTSSA isozyme uses both C14-CoA and C16-CoA as substrates, with a slight preference for C14-CoA. The SPTLC1-SPTLC2-SPTSSB complex shows a strong preference for C18-CoA substrate, while the SPTLC1-SPTLC3-SPTSSB isozyme displays an ability to use a broader range of acyl-CoAs, without apparent preference.</text>
</comment>
<comment type="catalytic activity">
    <reaction evidence="3">
        <text>L-serine + hexadecanoyl-CoA + H(+) = 3-oxosphinganine + CO2 + CoA</text>
        <dbReference type="Rhea" id="RHEA:14761"/>
        <dbReference type="ChEBI" id="CHEBI:15378"/>
        <dbReference type="ChEBI" id="CHEBI:16526"/>
        <dbReference type="ChEBI" id="CHEBI:33384"/>
        <dbReference type="ChEBI" id="CHEBI:57287"/>
        <dbReference type="ChEBI" id="CHEBI:57379"/>
        <dbReference type="ChEBI" id="CHEBI:58299"/>
        <dbReference type="EC" id="2.3.1.50"/>
    </reaction>
    <physiologicalReaction direction="left-to-right" evidence="3">
        <dbReference type="Rhea" id="RHEA:14762"/>
    </physiologicalReaction>
</comment>
<comment type="catalytic activity">
    <reaction evidence="3">
        <text>dodecanoyl-CoA + L-serine + H(+) = 3-oxotetradecasphinganine + CO2 + CoA</text>
        <dbReference type="Rhea" id="RHEA:35679"/>
        <dbReference type="ChEBI" id="CHEBI:15378"/>
        <dbReference type="ChEBI" id="CHEBI:16526"/>
        <dbReference type="ChEBI" id="CHEBI:33384"/>
        <dbReference type="ChEBI" id="CHEBI:57287"/>
        <dbReference type="ChEBI" id="CHEBI:57375"/>
        <dbReference type="ChEBI" id="CHEBI:71008"/>
    </reaction>
    <physiologicalReaction direction="left-to-right" evidence="3">
        <dbReference type="Rhea" id="RHEA:35680"/>
    </physiologicalReaction>
</comment>
<comment type="catalytic activity">
    <reaction evidence="3">
        <text>tetradecanoyl-CoA + L-serine + H(+) = 3-oxohexadecasphinganine + CO2 + CoA</text>
        <dbReference type="Rhea" id="RHEA:35675"/>
        <dbReference type="ChEBI" id="CHEBI:15378"/>
        <dbReference type="ChEBI" id="CHEBI:16526"/>
        <dbReference type="ChEBI" id="CHEBI:33384"/>
        <dbReference type="ChEBI" id="CHEBI:57287"/>
        <dbReference type="ChEBI" id="CHEBI:57385"/>
        <dbReference type="ChEBI" id="CHEBI:71007"/>
    </reaction>
    <physiologicalReaction direction="left-to-right" evidence="3">
        <dbReference type="Rhea" id="RHEA:35676"/>
    </physiologicalReaction>
</comment>
<comment type="catalytic activity">
    <reaction evidence="3">
        <text>octadecanoyl-CoA + L-serine + H(+) = 3-oxoeicosasphinganine + CO2 + CoA</text>
        <dbReference type="Rhea" id="RHEA:33683"/>
        <dbReference type="ChEBI" id="CHEBI:15378"/>
        <dbReference type="ChEBI" id="CHEBI:16526"/>
        <dbReference type="ChEBI" id="CHEBI:33384"/>
        <dbReference type="ChEBI" id="CHEBI:57287"/>
        <dbReference type="ChEBI" id="CHEBI:57394"/>
        <dbReference type="ChEBI" id="CHEBI:65073"/>
    </reaction>
    <physiologicalReaction direction="left-to-right" evidence="3">
        <dbReference type="Rhea" id="RHEA:33684"/>
    </physiologicalReaction>
</comment>
<comment type="cofactor">
    <cofactor evidence="1">
        <name>pyridoxal 5'-phosphate</name>
        <dbReference type="ChEBI" id="CHEBI:597326"/>
    </cofactor>
</comment>
<comment type="activity regulation">
    <text evidence="2 7">SPT complex catalytic activity is negatively regulated by ORMDL proteins, including ORMDL3, in the presence of ceramides (By similarity). This mechanism allows to maintain ceramide levels at sufficient concentrations for the production of complex sphingolipids, but which prevents the accumulation of ceramides to levels that trigger apoptosis (Probable).</text>
</comment>
<comment type="pathway">
    <text>Lipid metabolism; sphingolipid metabolism.</text>
</comment>
<comment type="subunit">
    <text evidence="3">Component of the serine palmitoyltransferase (SPT) complex, which is composed of SPTLC1, SPTLC2 or SPTLC3 and SPTSSA or SPTSSB. The heterodimer consisting of SPTLC1 and SPTLC2/SPTLC3 forms the catalytic core of the enzyme, while SPTSSA or SPTSSB subunits determine substrate specificity. SPT also interacts with ORMDL proteins, especially ORMDL3, which negatively regulate SPT activity in the presence of ceramides.</text>
</comment>
<comment type="subcellular location">
    <subcellularLocation>
        <location evidence="3">Endoplasmic reticulum membrane</location>
        <topology evidence="3">Single-pass membrane protein</topology>
    </subcellularLocation>
</comment>
<comment type="tissue specificity">
    <text evidence="6">Expressed in white and brown adipose tissues.</text>
</comment>
<comment type="similarity">
    <text evidence="7">Belongs to the class-II pyridoxal-phosphate-dependent aminotransferase family.</text>
</comment>
<comment type="sequence caution" evidence="7">
    <conflict type="frameshift">
        <sequence resource="EMBL-CDS" id="AAH94496"/>
    </conflict>
</comment>
<protein>
    <recommendedName>
        <fullName evidence="7">Serine palmitoyltransferase 3</fullName>
        <ecNumber evidence="3">2.3.1.50</ecNumber>
    </recommendedName>
    <alternativeName>
        <fullName>Long chain base biosynthesis protein 2b</fullName>
        <shortName>LCB2b</shortName>
    </alternativeName>
    <alternativeName>
        <fullName>Long chain base biosynthesis protein 3</fullName>
        <shortName>LCB 3</shortName>
    </alternativeName>
    <alternativeName>
        <fullName>Serine-palmityl-CoA transferase 3</fullName>
        <shortName>SPT 3</shortName>
    </alternativeName>
</protein>
<accession>Q8BG54</accession>
<accession>Q505L2</accession>
<gene>
    <name evidence="8" type="primary">Sptlc3</name>
    <name type="synonym">Sptlc2l</name>
</gene>
<reference key="1">
    <citation type="journal article" date="2005" name="Science">
        <title>The transcriptional landscape of the mammalian genome.</title>
        <authorList>
            <person name="Carninci P."/>
            <person name="Kasukawa T."/>
            <person name="Katayama S."/>
            <person name="Gough J."/>
            <person name="Frith M.C."/>
            <person name="Maeda N."/>
            <person name="Oyama R."/>
            <person name="Ravasi T."/>
            <person name="Lenhard B."/>
            <person name="Wells C."/>
            <person name="Kodzius R."/>
            <person name="Shimokawa K."/>
            <person name="Bajic V.B."/>
            <person name="Brenner S.E."/>
            <person name="Batalov S."/>
            <person name="Forrest A.R."/>
            <person name="Zavolan M."/>
            <person name="Davis M.J."/>
            <person name="Wilming L.G."/>
            <person name="Aidinis V."/>
            <person name="Allen J.E."/>
            <person name="Ambesi-Impiombato A."/>
            <person name="Apweiler R."/>
            <person name="Aturaliya R.N."/>
            <person name="Bailey T.L."/>
            <person name="Bansal M."/>
            <person name="Baxter L."/>
            <person name="Beisel K.W."/>
            <person name="Bersano T."/>
            <person name="Bono H."/>
            <person name="Chalk A.M."/>
            <person name="Chiu K.P."/>
            <person name="Choudhary V."/>
            <person name="Christoffels A."/>
            <person name="Clutterbuck D.R."/>
            <person name="Crowe M.L."/>
            <person name="Dalla E."/>
            <person name="Dalrymple B.P."/>
            <person name="de Bono B."/>
            <person name="Della Gatta G."/>
            <person name="di Bernardo D."/>
            <person name="Down T."/>
            <person name="Engstrom P."/>
            <person name="Fagiolini M."/>
            <person name="Faulkner G."/>
            <person name="Fletcher C.F."/>
            <person name="Fukushima T."/>
            <person name="Furuno M."/>
            <person name="Futaki S."/>
            <person name="Gariboldi M."/>
            <person name="Georgii-Hemming P."/>
            <person name="Gingeras T.R."/>
            <person name="Gojobori T."/>
            <person name="Green R.E."/>
            <person name="Gustincich S."/>
            <person name="Harbers M."/>
            <person name="Hayashi Y."/>
            <person name="Hensch T.K."/>
            <person name="Hirokawa N."/>
            <person name="Hill D."/>
            <person name="Huminiecki L."/>
            <person name="Iacono M."/>
            <person name="Ikeo K."/>
            <person name="Iwama A."/>
            <person name="Ishikawa T."/>
            <person name="Jakt M."/>
            <person name="Kanapin A."/>
            <person name="Katoh M."/>
            <person name="Kawasawa Y."/>
            <person name="Kelso J."/>
            <person name="Kitamura H."/>
            <person name="Kitano H."/>
            <person name="Kollias G."/>
            <person name="Krishnan S.P."/>
            <person name="Kruger A."/>
            <person name="Kummerfeld S.K."/>
            <person name="Kurochkin I.V."/>
            <person name="Lareau L.F."/>
            <person name="Lazarevic D."/>
            <person name="Lipovich L."/>
            <person name="Liu J."/>
            <person name="Liuni S."/>
            <person name="McWilliam S."/>
            <person name="Madan Babu M."/>
            <person name="Madera M."/>
            <person name="Marchionni L."/>
            <person name="Matsuda H."/>
            <person name="Matsuzawa S."/>
            <person name="Miki H."/>
            <person name="Mignone F."/>
            <person name="Miyake S."/>
            <person name="Morris K."/>
            <person name="Mottagui-Tabar S."/>
            <person name="Mulder N."/>
            <person name="Nakano N."/>
            <person name="Nakauchi H."/>
            <person name="Ng P."/>
            <person name="Nilsson R."/>
            <person name="Nishiguchi S."/>
            <person name="Nishikawa S."/>
            <person name="Nori F."/>
            <person name="Ohara O."/>
            <person name="Okazaki Y."/>
            <person name="Orlando V."/>
            <person name="Pang K.C."/>
            <person name="Pavan W.J."/>
            <person name="Pavesi G."/>
            <person name="Pesole G."/>
            <person name="Petrovsky N."/>
            <person name="Piazza S."/>
            <person name="Reed J."/>
            <person name="Reid J.F."/>
            <person name="Ring B.Z."/>
            <person name="Ringwald M."/>
            <person name="Rost B."/>
            <person name="Ruan Y."/>
            <person name="Salzberg S.L."/>
            <person name="Sandelin A."/>
            <person name="Schneider C."/>
            <person name="Schoenbach C."/>
            <person name="Sekiguchi K."/>
            <person name="Semple C.A."/>
            <person name="Seno S."/>
            <person name="Sessa L."/>
            <person name="Sheng Y."/>
            <person name="Shibata Y."/>
            <person name="Shimada H."/>
            <person name="Shimada K."/>
            <person name="Silva D."/>
            <person name="Sinclair B."/>
            <person name="Sperling S."/>
            <person name="Stupka E."/>
            <person name="Sugiura K."/>
            <person name="Sultana R."/>
            <person name="Takenaka Y."/>
            <person name="Taki K."/>
            <person name="Tammoja K."/>
            <person name="Tan S.L."/>
            <person name="Tang S."/>
            <person name="Taylor M.S."/>
            <person name="Tegner J."/>
            <person name="Teichmann S.A."/>
            <person name="Ueda H.R."/>
            <person name="van Nimwegen E."/>
            <person name="Verardo R."/>
            <person name="Wei C.L."/>
            <person name="Yagi K."/>
            <person name="Yamanishi H."/>
            <person name="Zabarovsky E."/>
            <person name="Zhu S."/>
            <person name="Zimmer A."/>
            <person name="Hide W."/>
            <person name="Bult C."/>
            <person name="Grimmond S.M."/>
            <person name="Teasdale R.D."/>
            <person name="Liu E.T."/>
            <person name="Brusic V."/>
            <person name="Quackenbush J."/>
            <person name="Wahlestedt C."/>
            <person name="Mattick J.S."/>
            <person name="Hume D.A."/>
            <person name="Kai C."/>
            <person name="Sasaki D."/>
            <person name="Tomaru Y."/>
            <person name="Fukuda S."/>
            <person name="Kanamori-Katayama M."/>
            <person name="Suzuki M."/>
            <person name="Aoki J."/>
            <person name="Arakawa T."/>
            <person name="Iida J."/>
            <person name="Imamura K."/>
            <person name="Itoh M."/>
            <person name="Kato T."/>
            <person name="Kawaji H."/>
            <person name="Kawagashira N."/>
            <person name="Kawashima T."/>
            <person name="Kojima M."/>
            <person name="Kondo S."/>
            <person name="Konno H."/>
            <person name="Nakano K."/>
            <person name="Ninomiya N."/>
            <person name="Nishio T."/>
            <person name="Okada M."/>
            <person name="Plessy C."/>
            <person name="Shibata K."/>
            <person name="Shiraki T."/>
            <person name="Suzuki S."/>
            <person name="Tagami M."/>
            <person name="Waki K."/>
            <person name="Watahiki A."/>
            <person name="Okamura-Oho Y."/>
            <person name="Suzuki H."/>
            <person name="Kawai J."/>
            <person name="Hayashizaki Y."/>
        </authorList>
    </citation>
    <scope>NUCLEOTIDE SEQUENCE [LARGE SCALE MRNA]</scope>
    <source>
        <strain>C57BL/6J</strain>
        <tissue>Embryonic head</tissue>
        <tissue>Eye</tissue>
        <tissue>Oviduct</tissue>
    </source>
</reference>
<reference key="2">
    <citation type="journal article" date="2009" name="PLoS Biol.">
        <title>Lineage-specific biology revealed by a finished genome assembly of the mouse.</title>
        <authorList>
            <person name="Church D.M."/>
            <person name="Goodstadt L."/>
            <person name="Hillier L.W."/>
            <person name="Zody M.C."/>
            <person name="Goldstein S."/>
            <person name="She X."/>
            <person name="Bult C.J."/>
            <person name="Agarwala R."/>
            <person name="Cherry J.L."/>
            <person name="DiCuccio M."/>
            <person name="Hlavina W."/>
            <person name="Kapustin Y."/>
            <person name="Meric P."/>
            <person name="Maglott D."/>
            <person name="Birtle Z."/>
            <person name="Marques A.C."/>
            <person name="Graves T."/>
            <person name="Zhou S."/>
            <person name="Teague B."/>
            <person name="Potamousis K."/>
            <person name="Churas C."/>
            <person name="Place M."/>
            <person name="Herschleb J."/>
            <person name="Runnheim R."/>
            <person name="Forrest D."/>
            <person name="Amos-Landgraf J."/>
            <person name="Schwartz D.C."/>
            <person name="Cheng Z."/>
            <person name="Lindblad-Toh K."/>
            <person name="Eichler E.E."/>
            <person name="Ponting C.P."/>
        </authorList>
    </citation>
    <scope>NUCLEOTIDE SEQUENCE [LARGE SCALE GENOMIC DNA]</scope>
    <source>
        <strain>C57BL/6J</strain>
    </source>
</reference>
<reference key="3">
    <citation type="journal article" date="2004" name="Genome Res.">
        <title>The status, quality, and expansion of the NIH full-length cDNA project: the Mammalian Gene Collection (MGC).</title>
        <authorList>
            <consortium name="The MGC Project Team"/>
        </authorList>
    </citation>
    <scope>NUCLEOTIDE SEQUENCE [LARGE SCALE MRNA]</scope>
    <source>
        <tissue>Mammary tumor</tissue>
    </source>
</reference>
<reference key="4">
    <citation type="journal article" date="2016" name="Cell Metab.">
        <title>Adipocyte Ceramides Regulate Subcutaneous Adipose Browning, Inflammation, and Metabolism.</title>
        <authorList>
            <person name="Chaurasia B."/>
            <person name="Kaddai V.A."/>
            <person name="Lancaster G.I."/>
            <person name="Henstridge D.C."/>
            <person name="Sriram S."/>
            <person name="Galam D.L."/>
            <person name="Gopalan V."/>
            <person name="Prakash K.N."/>
            <person name="Velan S.S."/>
            <person name="Bulchand S."/>
            <person name="Tsong T.J."/>
            <person name="Wang M."/>
            <person name="Siddique M.M."/>
            <person name="Yuguang G."/>
            <person name="Sigmundsson K."/>
            <person name="Mellet N.A."/>
            <person name="Weir J.M."/>
            <person name="Meikle P.J."/>
            <person name="Bin M Yassin M.S."/>
            <person name="Shabbir A."/>
            <person name="Shayman J.A."/>
            <person name="Hirabayashi Y."/>
            <person name="Shiow S.T."/>
            <person name="Sugii S."/>
            <person name="Summers S.A."/>
        </authorList>
    </citation>
    <scope>TISSUE SPECIFICITY</scope>
</reference>